<dbReference type="EMBL" id="CP000915">
    <property type="protein sequence ID" value="ACD31352.1"/>
    <property type="molecule type" value="Genomic_DNA"/>
</dbReference>
<dbReference type="SMR" id="B2SDY8"/>
<dbReference type="KEGG" id="ftm:FTM_1530"/>
<dbReference type="HOGENOM" id="CLU_072226_1_1_6"/>
<dbReference type="GO" id="GO:0015935">
    <property type="term" value="C:small ribosomal subunit"/>
    <property type="evidence" value="ECO:0007669"/>
    <property type="project" value="InterPro"/>
</dbReference>
<dbReference type="GO" id="GO:0019843">
    <property type="term" value="F:rRNA binding"/>
    <property type="evidence" value="ECO:0007669"/>
    <property type="project" value="UniProtKB-UniRule"/>
</dbReference>
<dbReference type="GO" id="GO:0003735">
    <property type="term" value="F:structural constituent of ribosome"/>
    <property type="evidence" value="ECO:0007669"/>
    <property type="project" value="InterPro"/>
</dbReference>
<dbReference type="GO" id="GO:0000049">
    <property type="term" value="F:tRNA binding"/>
    <property type="evidence" value="ECO:0007669"/>
    <property type="project" value="UniProtKB-UniRule"/>
</dbReference>
<dbReference type="GO" id="GO:0006412">
    <property type="term" value="P:translation"/>
    <property type="evidence" value="ECO:0007669"/>
    <property type="project" value="UniProtKB-UniRule"/>
</dbReference>
<dbReference type="CDD" id="cd14869">
    <property type="entry name" value="uS7_Bacteria"/>
    <property type="match status" value="1"/>
</dbReference>
<dbReference type="FunFam" id="1.10.455.10:FF:000001">
    <property type="entry name" value="30S ribosomal protein S7"/>
    <property type="match status" value="1"/>
</dbReference>
<dbReference type="Gene3D" id="1.10.455.10">
    <property type="entry name" value="Ribosomal protein S7 domain"/>
    <property type="match status" value="1"/>
</dbReference>
<dbReference type="HAMAP" id="MF_00480_B">
    <property type="entry name" value="Ribosomal_uS7_B"/>
    <property type="match status" value="1"/>
</dbReference>
<dbReference type="InterPro" id="IPR000235">
    <property type="entry name" value="Ribosomal_uS7"/>
</dbReference>
<dbReference type="InterPro" id="IPR005717">
    <property type="entry name" value="Ribosomal_uS7_bac/org-type"/>
</dbReference>
<dbReference type="InterPro" id="IPR020606">
    <property type="entry name" value="Ribosomal_uS7_CS"/>
</dbReference>
<dbReference type="InterPro" id="IPR023798">
    <property type="entry name" value="Ribosomal_uS7_dom"/>
</dbReference>
<dbReference type="InterPro" id="IPR036823">
    <property type="entry name" value="Ribosomal_uS7_dom_sf"/>
</dbReference>
<dbReference type="NCBIfam" id="TIGR01029">
    <property type="entry name" value="rpsG_bact"/>
    <property type="match status" value="1"/>
</dbReference>
<dbReference type="PANTHER" id="PTHR11205">
    <property type="entry name" value="RIBOSOMAL PROTEIN S7"/>
    <property type="match status" value="1"/>
</dbReference>
<dbReference type="Pfam" id="PF00177">
    <property type="entry name" value="Ribosomal_S7"/>
    <property type="match status" value="1"/>
</dbReference>
<dbReference type="PIRSF" id="PIRSF002122">
    <property type="entry name" value="RPS7p_RPS7a_RPS5e_RPS7o"/>
    <property type="match status" value="1"/>
</dbReference>
<dbReference type="SUPFAM" id="SSF47973">
    <property type="entry name" value="Ribosomal protein S7"/>
    <property type="match status" value="1"/>
</dbReference>
<dbReference type="PROSITE" id="PS00052">
    <property type="entry name" value="RIBOSOMAL_S7"/>
    <property type="match status" value="1"/>
</dbReference>
<accession>B2SDY8</accession>
<evidence type="ECO:0000255" key="1">
    <source>
        <dbReference type="HAMAP-Rule" id="MF_00480"/>
    </source>
</evidence>
<evidence type="ECO:0000305" key="2"/>
<gene>
    <name evidence="1" type="primary">rpsG</name>
    <name type="ordered locus">FTM_1530</name>
</gene>
<protein>
    <recommendedName>
        <fullName evidence="1">Small ribosomal subunit protein uS7</fullName>
    </recommendedName>
    <alternativeName>
        <fullName evidence="2">30S ribosomal protein S7</fullName>
    </alternativeName>
</protein>
<sequence length="157" mass="17808">MSRRNRAPKRDILPDPKYKSQVVAKFVNHIMLSGKKSIAEKIVYGAFDKIKAKDASANEVEVFEKALESVSPMVEVKSRRVGGATYQVPVEVRPERRQTLGMRWIIDAARKRKENTMGDRVAAEILEAVEGRGAAVKKREDTHKMAEANKAFAHFRW</sequence>
<name>RS7_FRATM</name>
<reference key="1">
    <citation type="journal article" date="2009" name="PLoS Pathog.">
        <title>Molecular evolutionary consequences of niche restriction in Francisella tularensis, a facultative intracellular pathogen.</title>
        <authorList>
            <person name="Larsson P."/>
            <person name="Elfsmark D."/>
            <person name="Svensson K."/>
            <person name="Wikstroem P."/>
            <person name="Forsman M."/>
            <person name="Brettin T."/>
            <person name="Keim P."/>
            <person name="Johansson A."/>
        </authorList>
    </citation>
    <scope>NUCLEOTIDE SEQUENCE [LARGE SCALE GENOMIC DNA]</scope>
    <source>
        <strain>FSC147</strain>
    </source>
</reference>
<feature type="chain" id="PRO_1000125950" description="Small ribosomal subunit protein uS7">
    <location>
        <begin position="1"/>
        <end position="157"/>
    </location>
</feature>
<proteinExistence type="inferred from homology"/>
<keyword id="KW-0687">Ribonucleoprotein</keyword>
<keyword id="KW-0689">Ribosomal protein</keyword>
<keyword id="KW-0694">RNA-binding</keyword>
<keyword id="KW-0699">rRNA-binding</keyword>
<keyword id="KW-0820">tRNA-binding</keyword>
<comment type="function">
    <text evidence="1">One of the primary rRNA binding proteins, it binds directly to 16S rRNA where it nucleates assembly of the head domain of the 30S subunit. Is located at the subunit interface close to the decoding center, probably blocks exit of the E-site tRNA.</text>
</comment>
<comment type="subunit">
    <text evidence="1">Part of the 30S ribosomal subunit. Contacts proteins S9 and S11.</text>
</comment>
<comment type="similarity">
    <text evidence="1">Belongs to the universal ribosomal protein uS7 family.</text>
</comment>
<organism>
    <name type="scientific">Francisella tularensis subsp. mediasiatica (strain FSC147)</name>
    <dbReference type="NCBI Taxonomy" id="441952"/>
    <lineage>
        <taxon>Bacteria</taxon>
        <taxon>Pseudomonadati</taxon>
        <taxon>Pseudomonadota</taxon>
        <taxon>Gammaproteobacteria</taxon>
        <taxon>Thiotrichales</taxon>
        <taxon>Francisellaceae</taxon>
        <taxon>Francisella</taxon>
    </lineage>
</organism>